<sequence length="372" mass="41684">MPLPDFHVSEPFTLGIELEMQVVNPPGYDLSQDSSMLIDAVKNKITAGEVKHDITESMLELATDVCRDINQAAGQFSAMQKVVLQAAADHHLEICGGGTHPFQKWQRQEVCDNERYQRTLENFGYLIQQATVFGQHVHVGCASGDDAIYLLHGLSRFVPHFIALSAASPYMQGTDTRFASSRPNIFSAFPDNGPMPWVSNWQQFEALFRCLSYTTMIDSIKDLHWDIRPSPHFGTVEVRVMDTPLTLSHAVNMAGLIQATAHWLLTERPFKHKEKDYLLYKFNRFQACRYGLEGVITDPYTGDRRPLTEDTLRLLEKIAPSAHKIGASSAIEALHRQVVSGLNEAQLMRDFVADGGSLIGLVKKHCEIWAGD</sequence>
<name>GCS2_ECO57</name>
<protein>
    <recommendedName>
        <fullName evidence="1">Putative glutamate--cysteine ligase 2</fullName>
        <ecNumber evidence="1">6.3.2.2</ecNumber>
    </recommendedName>
    <alternativeName>
        <fullName evidence="1">Gamma-glutamylcysteine synthetase 2</fullName>
        <shortName evidence="1">GCS 2</shortName>
        <shortName evidence="1">Gamma-GCS 2</shortName>
    </alternativeName>
</protein>
<accession>Q8XBX1</accession>
<accession>Q7AGS4</accession>
<gene>
    <name type="primary">ybdK</name>
    <name type="ordered locus">Z0720</name>
    <name type="ordered locus">ECs0619</name>
</gene>
<comment type="function">
    <text evidence="1">ATP-dependent carboxylate-amine ligase which exhibits weak glutamate--cysteine ligase activity.</text>
</comment>
<comment type="catalytic activity">
    <reaction evidence="1">
        <text>L-cysteine + L-glutamate + ATP = gamma-L-glutamyl-L-cysteine + ADP + phosphate + H(+)</text>
        <dbReference type="Rhea" id="RHEA:13285"/>
        <dbReference type="ChEBI" id="CHEBI:15378"/>
        <dbReference type="ChEBI" id="CHEBI:29985"/>
        <dbReference type="ChEBI" id="CHEBI:30616"/>
        <dbReference type="ChEBI" id="CHEBI:35235"/>
        <dbReference type="ChEBI" id="CHEBI:43474"/>
        <dbReference type="ChEBI" id="CHEBI:58173"/>
        <dbReference type="ChEBI" id="CHEBI:456216"/>
        <dbReference type="EC" id="6.3.2.2"/>
    </reaction>
</comment>
<comment type="subunit">
    <text evidence="1">Homodimer.</text>
</comment>
<comment type="similarity">
    <text evidence="1">Belongs to the glutamate--cysteine ligase type 2 family. YbdK subfamily.</text>
</comment>
<dbReference type="EC" id="6.3.2.2" evidence="1"/>
<dbReference type="EMBL" id="AE005174">
    <property type="protein sequence ID" value="AAG54914.1"/>
    <property type="molecule type" value="Genomic_DNA"/>
</dbReference>
<dbReference type="EMBL" id="BA000007">
    <property type="protein sequence ID" value="BAB34042.1"/>
    <property type="molecule type" value="Genomic_DNA"/>
</dbReference>
<dbReference type="PIR" id="C90706">
    <property type="entry name" value="C90706"/>
</dbReference>
<dbReference type="PIR" id="F85556">
    <property type="entry name" value="F85556"/>
</dbReference>
<dbReference type="RefSeq" id="NP_308646.1">
    <property type="nucleotide sequence ID" value="NC_002695.1"/>
</dbReference>
<dbReference type="RefSeq" id="WP_001130633.1">
    <property type="nucleotide sequence ID" value="NZ_VOAI01000012.1"/>
</dbReference>
<dbReference type="SMR" id="Q8XBX1"/>
<dbReference type="STRING" id="155864.Z0720"/>
<dbReference type="GeneID" id="916978"/>
<dbReference type="KEGG" id="ece:Z0720"/>
<dbReference type="KEGG" id="ecs:ECs_0619"/>
<dbReference type="PATRIC" id="fig|386585.9.peg.727"/>
<dbReference type="eggNOG" id="COG2170">
    <property type="taxonomic scope" value="Bacteria"/>
</dbReference>
<dbReference type="HOGENOM" id="CLU_044848_1_1_6"/>
<dbReference type="OMA" id="THPFAQW"/>
<dbReference type="Proteomes" id="UP000000558">
    <property type="component" value="Chromosome"/>
</dbReference>
<dbReference type="Proteomes" id="UP000002519">
    <property type="component" value="Chromosome"/>
</dbReference>
<dbReference type="GO" id="GO:0005524">
    <property type="term" value="F:ATP binding"/>
    <property type="evidence" value="ECO:0007669"/>
    <property type="project" value="UniProtKB-KW"/>
</dbReference>
<dbReference type="GO" id="GO:0004357">
    <property type="term" value="F:glutamate-cysteine ligase activity"/>
    <property type="evidence" value="ECO:0007669"/>
    <property type="project" value="UniProtKB-EC"/>
</dbReference>
<dbReference type="GO" id="GO:0042398">
    <property type="term" value="P:modified amino acid biosynthetic process"/>
    <property type="evidence" value="ECO:0007669"/>
    <property type="project" value="InterPro"/>
</dbReference>
<dbReference type="FunFam" id="3.30.590.20:FF:000002">
    <property type="entry name" value="Putative glutamate--cysteine ligase 2"/>
    <property type="match status" value="1"/>
</dbReference>
<dbReference type="Gene3D" id="3.30.590.20">
    <property type="match status" value="1"/>
</dbReference>
<dbReference type="HAMAP" id="MF_01609">
    <property type="entry name" value="Glu_cys_ligase_2"/>
    <property type="match status" value="1"/>
</dbReference>
<dbReference type="InterPro" id="IPR050141">
    <property type="entry name" value="GCL_type2/YbdK_subfam"/>
</dbReference>
<dbReference type="InterPro" id="IPR006336">
    <property type="entry name" value="GCS2"/>
</dbReference>
<dbReference type="InterPro" id="IPR014746">
    <property type="entry name" value="Gln_synth/guanido_kin_cat_dom"/>
</dbReference>
<dbReference type="InterPro" id="IPR011793">
    <property type="entry name" value="YbdK"/>
</dbReference>
<dbReference type="NCBIfam" id="TIGR02050">
    <property type="entry name" value="gshA_cyan_rel"/>
    <property type="match status" value="1"/>
</dbReference>
<dbReference type="NCBIfam" id="NF010040">
    <property type="entry name" value="PRK13516.1"/>
    <property type="match status" value="1"/>
</dbReference>
<dbReference type="PANTHER" id="PTHR36510">
    <property type="entry name" value="GLUTAMATE--CYSTEINE LIGASE 2-RELATED"/>
    <property type="match status" value="1"/>
</dbReference>
<dbReference type="PANTHER" id="PTHR36510:SF1">
    <property type="entry name" value="GLUTAMATE--CYSTEINE LIGASE 2-RELATED"/>
    <property type="match status" value="1"/>
</dbReference>
<dbReference type="Pfam" id="PF04107">
    <property type="entry name" value="GCS2"/>
    <property type="match status" value="1"/>
</dbReference>
<dbReference type="SUPFAM" id="SSF55931">
    <property type="entry name" value="Glutamine synthetase/guanido kinase"/>
    <property type="match status" value="1"/>
</dbReference>
<reference key="1">
    <citation type="journal article" date="2001" name="Nature">
        <title>Genome sequence of enterohaemorrhagic Escherichia coli O157:H7.</title>
        <authorList>
            <person name="Perna N.T."/>
            <person name="Plunkett G. III"/>
            <person name="Burland V."/>
            <person name="Mau B."/>
            <person name="Glasner J.D."/>
            <person name="Rose D.J."/>
            <person name="Mayhew G.F."/>
            <person name="Evans P.S."/>
            <person name="Gregor J."/>
            <person name="Kirkpatrick H.A."/>
            <person name="Posfai G."/>
            <person name="Hackett J."/>
            <person name="Klink S."/>
            <person name="Boutin A."/>
            <person name="Shao Y."/>
            <person name="Miller L."/>
            <person name="Grotbeck E.J."/>
            <person name="Davis N.W."/>
            <person name="Lim A."/>
            <person name="Dimalanta E.T."/>
            <person name="Potamousis K."/>
            <person name="Apodaca J."/>
            <person name="Anantharaman T.S."/>
            <person name="Lin J."/>
            <person name="Yen G."/>
            <person name="Schwartz D.C."/>
            <person name="Welch R.A."/>
            <person name="Blattner F.R."/>
        </authorList>
    </citation>
    <scope>NUCLEOTIDE SEQUENCE [LARGE SCALE GENOMIC DNA]</scope>
    <source>
        <strain>O157:H7 / EDL933 / ATCC 700927 / EHEC</strain>
    </source>
</reference>
<reference key="2">
    <citation type="journal article" date="2001" name="DNA Res.">
        <title>Complete genome sequence of enterohemorrhagic Escherichia coli O157:H7 and genomic comparison with a laboratory strain K-12.</title>
        <authorList>
            <person name="Hayashi T."/>
            <person name="Makino K."/>
            <person name="Ohnishi M."/>
            <person name="Kurokawa K."/>
            <person name="Ishii K."/>
            <person name="Yokoyama K."/>
            <person name="Han C.-G."/>
            <person name="Ohtsubo E."/>
            <person name="Nakayama K."/>
            <person name="Murata T."/>
            <person name="Tanaka M."/>
            <person name="Tobe T."/>
            <person name="Iida T."/>
            <person name="Takami H."/>
            <person name="Honda T."/>
            <person name="Sasakawa C."/>
            <person name="Ogasawara N."/>
            <person name="Yasunaga T."/>
            <person name="Kuhara S."/>
            <person name="Shiba T."/>
            <person name="Hattori M."/>
            <person name="Shinagawa H."/>
        </authorList>
    </citation>
    <scope>NUCLEOTIDE SEQUENCE [LARGE SCALE GENOMIC DNA]</scope>
    <source>
        <strain>O157:H7 / Sakai / RIMD 0509952 / EHEC</strain>
    </source>
</reference>
<evidence type="ECO:0000255" key="1">
    <source>
        <dbReference type="HAMAP-Rule" id="MF_01609"/>
    </source>
</evidence>
<keyword id="KW-0067">ATP-binding</keyword>
<keyword id="KW-0436">Ligase</keyword>
<keyword id="KW-0547">Nucleotide-binding</keyword>
<keyword id="KW-1185">Reference proteome</keyword>
<feature type="chain" id="PRO_0000218197" description="Putative glutamate--cysteine ligase 2">
    <location>
        <begin position="1"/>
        <end position="372"/>
    </location>
</feature>
<proteinExistence type="inferred from homology"/>
<organism>
    <name type="scientific">Escherichia coli O157:H7</name>
    <dbReference type="NCBI Taxonomy" id="83334"/>
    <lineage>
        <taxon>Bacteria</taxon>
        <taxon>Pseudomonadati</taxon>
        <taxon>Pseudomonadota</taxon>
        <taxon>Gammaproteobacteria</taxon>
        <taxon>Enterobacterales</taxon>
        <taxon>Enterobacteriaceae</taxon>
        <taxon>Escherichia</taxon>
    </lineage>
</organism>